<accession>Q9A5I0</accession>
<protein>
    <recommendedName>
        <fullName evidence="1">ATP-dependent Clp protease adapter protein ClpS</fullName>
    </recommendedName>
</protein>
<organism>
    <name type="scientific">Caulobacter vibrioides (strain ATCC 19089 / CIP 103742 / CB 15)</name>
    <name type="common">Caulobacter crescentus</name>
    <dbReference type="NCBI Taxonomy" id="190650"/>
    <lineage>
        <taxon>Bacteria</taxon>
        <taxon>Pseudomonadati</taxon>
        <taxon>Pseudomonadota</taxon>
        <taxon>Alphaproteobacteria</taxon>
        <taxon>Caulobacterales</taxon>
        <taxon>Caulobacteraceae</taxon>
        <taxon>Caulobacter</taxon>
    </lineage>
</organism>
<gene>
    <name evidence="1" type="primary">clpS</name>
    <name type="ordered locus">CC_2467</name>
</gene>
<sequence length="119" mass="13413">MICPPGENKSMAERKQGGQGNGVGSSVVTEVKPKTQKPSLYRVLILNDDYTPMEFVVYVLERFFNKSREDATRIMLHVHQNGVGVCGVYTYEVAETKVAQVIDSARRHQHPLQCTMEKD</sequence>
<evidence type="ECO:0000255" key="1">
    <source>
        <dbReference type="HAMAP-Rule" id="MF_00302"/>
    </source>
</evidence>
<evidence type="ECO:0000256" key="2">
    <source>
        <dbReference type="SAM" id="MobiDB-lite"/>
    </source>
</evidence>
<evidence type="ECO:0007829" key="3">
    <source>
        <dbReference type="PDB" id="3DNJ"/>
    </source>
</evidence>
<dbReference type="EMBL" id="AE005673">
    <property type="protein sequence ID" value="AAK24438.1"/>
    <property type="molecule type" value="Genomic_DNA"/>
</dbReference>
<dbReference type="PIR" id="B87555">
    <property type="entry name" value="B87555"/>
</dbReference>
<dbReference type="RefSeq" id="NP_421270.1">
    <property type="nucleotide sequence ID" value="NC_002696.2"/>
</dbReference>
<dbReference type="PDB" id="3DNJ">
    <property type="method" value="X-ray"/>
    <property type="resolution" value="1.15 A"/>
    <property type="chains" value="A/B=35-119"/>
</dbReference>
<dbReference type="PDB" id="3G19">
    <property type="method" value="X-ray"/>
    <property type="resolution" value="1.85 A"/>
    <property type="chains" value="A=35-119"/>
</dbReference>
<dbReference type="PDB" id="3G1B">
    <property type="method" value="X-ray"/>
    <property type="resolution" value="1.45 A"/>
    <property type="chains" value="A/B=35-119"/>
</dbReference>
<dbReference type="PDB" id="3G3P">
    <property type="method" value="X-ray"/>
    <property type="resolution" value="1.48 A"/>
    <property type="chains" value="A/B=35-119"/>
</dbReference>
<dbReference type="PDB" id="3GQ0">
    <property type="method" value="X-ray"/>
    <property type="resolution" value="2.07 A"/>
    <property type="chains" value="A/B=35-119"/>
</dbReference>
<dbReference type="PDB" id="3GQ1">
    <property type="method" value="X-ray"/>
    <property type="resolution" value="1.50 A"/>
    <property type="chains" value="A/B=35-119"/>
</dbReference>
<dbReference type="PDB" id="3GW1">
    <property type="method" value="X-ray"/>
    <property type="resolution" value="2.36 A"/>
    <property type="chains" value="A/B=35-119"/>
</dbReference>
<dbReference type="PDBsum" id="3DNJ"/>
<dbReference type="PDBsum" id="3G19"/>
<dbReference type="PDBsum" id="3G1B"/>
<dbReference type="PDBsum" id="3G3P"/>
<dbReference type="PDBsum" id="3GQ0"/>
<dbReference type="PDBsum" id="3GQ1"/>
<dbReference type="PDBsum" id="3GW1"/>
<dbReference type="SMR" id="Q9A5I0"/>
<dbReference type="DIP" id="DIP-48881N"/>
<dbReference type="STRING" id="190650.CC_2467"/>
<dbReference type="EnsemblBacteria" id="AAK24438">
    <property type="protein sequence ID" value="AAK24438"/>
    <property type="gene ID" value="CC_2467"/>
</dbReference>
<dbReference type="KEGG" id="ccr:CC_2467"/>
<dbReference type="PATRIC" id="fig|190650.5.peg.2484"/>
<dbReference type="eggNOG" id="COG2127">
    <property type="taxonomic scope" value="Bacteria"/>
</dbReference>
<dbReference type="HOGENOM" id="CLU_134358_0_0_5"/>
<dbReference type="BioCyc" id="CAULO:CC2467-MONOMER"/>
<dbReference type="EvolutionaryTrace" id="Q9A5I0"/>
<dbReference type="Proteomes" id="UP000001816">
    <property type="component" value="Chromosome"/>
</dbReference>
<dbReference type="GO" id="GO:0030163">
    <property type="term" value="P:protein catabolic process"/>
    <property type="evidence" value="ECO:0007669"/>
    <property type="project" value="InterPro"/>
</dbReference>
<dbReference type="GO" id="GO:0006508">
    <property type="term" value="P:proteolysis"/>
    <property type="evidence" value="ECO:0007669"/>
    <property type="project" value="UniProtKB-UniRule"/>
</dbReference>
<dbReference type="FunFam" id="3.30.1390.10:FF:000002">
    <property type="entry name" value="ATP-dependent Clp protease adapter protein ClpS"/>
    <property type="match status" value="1"/>
</dbReference>
<dbReference type="Gene3D" id="3.30.1390.10">
    <property type="match status" value="1"/>
</dbReference>
<dbReference type="HAMAP" id="MF_00302">
    <property type="entry name" value="ClpS"/>
    <property type="match status" value="1"/>
</dbReference>
<dbReference type="InterPro" id="IPR022935">
    <property type="entry name" value="ClpS"/>
</dbReference>
<dbReference type="InterPro" id="IPR003769">
    <property type="entry name" value="ClpS_core"/>
</dbReference>
<dbReference type="InterPro" id="IPR014719">
    <property type="entry name" value="Ribosomal_bL12_C/ClpS-like"/>
</dbReference>
<dbReference type="NCBIfam" id="NF000669">
    <property type="entry name" value="PRK00033.1-2"/>
    <property type="match status" value="1"/>
</dbReference>
<dbReference type="NCBIfam" id="NF000672">
    <property type="entry name" value="PRK00033.1-5"/>
    <property type="match status" value="1"/>
</dbReference>
<dbReference type="PANTHER" id="PTHR33473:SF19">
    <property type="entry name" value="ATP-DEPENDENT CLP PROTEASE ADAPTER PROTEIN CLPS"/>
    <property type="match status" value="1"/>
</dbReference>
<dbReference type="PANTHER" id="PTHR33473">
    <property type="entry name" value="ATP-DEPENDENT CLP PROTEASE ADAPTER PROTEIN CLPS1, CHLOROPLASTIC"/>
    <property type="match status" value="1"/>
</dbReference>
<dbReference type="Pfam" id="PF02617">
    <property type="entry name" value="ClpS"/>
    <property type="match status" value="1"/>
</dbReference>
<dbReference type="SUPFAM" id="SSF54736">
    <property type="entry name" value="ClpS-like"/>
    <property type="match status" value="1"/>
</dbReference>
<keyword id="KW-0002">3D-structure</keyword>
<keyword id="KW-1185">Reference proteome</keyword>
<comment type="function">
    <text evidence="1">Involved in the modulation of the specificity of the ClpAP-mediated ATP-dependent protein degradation.</text>
</comment>
<comment type="subunit">
    <text evidence="1">Binds to the N-terminal domain of the chaperone ClpA.</text>
</comment>
<comment type="similarity">
    <text evidence="1">Belongs to the ClpS family.</text>
</comment>
<reference key="1">
    <citation type="journal article" date="2001" name="Proc. Natl. Acad. Sci. U.S.A.">
        <title>Complete genome sequence of Caulobacter crescentus.</title>
        <authorList>
            <person name="Nierman W.C."/>
            <person name="Feldblyum T.V."/>
            <person name="Laub M.T."/>
            <person name="Paulsen I.T."/>
            <person name="Nelson K.E."/>
            <person name="Eisen J.A."/>
            <person name="Heidelberg J.F."/>
            <person name="Alley M.R.K."/>
            <person name="Ohta N."/>
            <person name="Maddock J.R."/>
            <person name="Potocka I."/>
            <person name="Nelson W.C."/>
            <person name="Newton A."/>
            <person name="Stephens C."/>
            <person name="Phadke N.D."/>
            <person name="Ely B."/>
            <person name="DeBoy R.T."/>
            <person name="Dodson R.J."/>
            <person name="Durkin A.S."/>
            <person name="Gwinn M.L."/>
            <person name="Haft D.H."/>
            <person name="Kolonay J.F."/>
            <person name="Smit J."/>
            <person name="Craven M.B."/>
            <person name="Khouri H.M."/>
            <person name="Shetty J."/>
            <person name="Berry K.J."/>
            <person name="Utterback T.R."/>
            <person name="Tran K."/>
            <person name="Wolf A.M."/>
            <person name="Vamathevan J.J."/>
            <person name="Ermolaeva M.D."/>
            <person name="White O."/>
            <person name="Salzberg S.L."/>
            <person name="Venter J.C."/>
            <person name="Shapiro L."/>
            <person name="Fraser C.M."/>
        </authorList>
    </citation>
    <scope>NUCLEOTIDE SEQUENCE [LARGE SCALE GENOMIC DNA]</scope>
    <source>
        <strain>ATCC 19089 / CIP 103742 / CB 15</strain>
    </source>
</reference>
<proteinExistence type="evidence at protein level"/>
<feature type="chain" id="PRO_0000215698" description="ATP-dependent Clp protease adapter protein ClpS">
    <location>
        <begin position="1"/>
        <end position="119"/>
    </location>
</feature>
<feature type="region of interest" description="Disordered" evidence="2">
    <location>
        <begin position="1"/>
        <end position="29"/>
    </location>
</feature>
<feature type="strand" evidence="3">
    <location>
        <begin position="41"/>
        <end position="46"/>
    </location>
</feature>
<feature type="strand" evidence="3">
    <location>
        <begin position="49"/>
        <end position="52"/>
    </location>
</feature>
<feature type="helix" evidence="3">
    <location>
        <begin position="53"/>
        <end position="64"/>
    </location>
</feature>
<feature type="helix" evidence="3">
    <location>
        <begin position="68"/>
        <end position="81"/>
    </location>
</feature>
<feature type="strand" evidence="3">
    <location>
        <begin position="82"/>
        <end position="89"/>
    </location>
</feature>
<feature type="helix" evidence="3">
    <location>
        <begin position="91"/>
        <end position="107"/>
    </location>
</feature>
<feature type="strand" evidence="3">
    <location>
        <begin position="114"/>
        <end position="118"/>
    </location>
</feature>
<name>CLPS_CAUVC</name>